<sequence length="343" mass="36819">MTITPQEALQRTIEHREIFHDEMLHLMRLIMRGDMSPVMAAAIITGLRVKKETIGEIAAAATVMREFANHVEVQDNSNFVDIVGTGGDGSHTFNISTASMFIAAAAGAKVAKHGNRGVSSKSGSADVLDALGVNIDLQPDQVAASIAETGMGFMFAPNHHPAMKNIAAVRRELGVRTIFNILGPLTNPAGAPNQLMGVFHPDLVGIQVRVMQRLGAQHVLVVYGKDGMDEVSLGAATLVGELRDGQVHEYEIHPEDFGLQMVSNRTLKVENAEESRTMLLGALDNQPGVAREIVTLNAGTALYAANIAESIADGIQLAREAIASGKARAKVDELVRFTQQFKR</sequence>
<feature type="chain" id="PRO_1000099787" description="Anthranilate phosphoribosyltransferase">
    <location>
        <begin position="1"/>
        <end position="343"/>
    </location>
</feature>
<feature type="binding site" evidence="1">
    <location>
        <position position="84"/>
    </location>
    <ligand>
        <name>5-phospho-alpha-D-ribose 1-diphosphate</name>
        <dbReference type="ChEBI" id="CHEBI:58017"/>
    </ligand>
</feature>
<feature type="binding site" evidence="1">
    <location>
        <position position="84"/>
    </location>
    <ligand>
        <name>anthranilate</name>
        <dbReference type="ChEBI" id="CHEBI:16567"/>
        <label>1</label>
    </ligand>
</feature>
<feature type="binding site" evidence="1">
    <location>
        <begin position="87"/>
        <end position="88"/>
    </location>
    <ligand>
        <name>5-phospho-alpha-D-ribose 1-diphosphate</name>
        <dbReference type="ChEBI" id="CHEBI:58017"/>
    </ligand>
</feature>
<feature type="binding site" evidence="1">
    <location>
        <position position="92"/>
    </location>
    <ligand>
        <name>5-phospho-alpha-D-ribose 1-diphosphate</name>
        <dbReference type="ChEBI" id="CHEBI:58017"/>
    </ligand>
</feature>
<feature type="binding site" evidence="1">
    <location>
        <begin position="94"/>
        <end position="97"/>
    </location>
    <ligand>
        <name>5-phospho-alpha-D-ribose 1-diphosphate</name>
        <dbReference type="ChEBI" id="CHEBI:58017"/>
    </ligand>
</feature>
<feature type="binding site" evidence="1">
    <location>
        <position position="96"/>
    </location>
    <ligand>
        <name>Mg(2+)</name>
        <dbReference type="ChEBI" id="CHEBI:18420"/>
        <label>1</label>
    </ligand>
</feature>
<feature type="binding site" evidence="1">
    <location>
        <begin position="112"/>
        <end position="120"/>
    </location>
    <ligand>
        <name>5-phospho-alpha-D-ribose 1-diphosphate</name>
        <dbReference type="ChEBI" id="CHEBI:58017"/>
    </ligand>
</feature>
<feature type="binding site" evidence="1">
    <location>
        <position position="115"/>
    </location>
    <ligand>
        <name>anthranilate</name>
        <dbReference type="ChEBI" id="CHEBI:16567"/>
        <label>1</label>
    </ligand>
</feature>
<feature type="binding site" evidence="1">
    <location>
        <position position="124"/>
    </location>
    <ligand>
        <name>5-phospho-alpha-D-ribose 1-diphosphate</name>
        <dbReference type="ChEBI" id="CHEBI:58017"/>
    </ligand>
</feature>
<feature type="binding site" evidence="1">
    <location>
        <position position="170"/>
    </location>
    <ligand>
        <name>anthranilate</name>
        <dbReference type="ChEBI" id="CHEBI:16567"/>
        <label>2</label>
    </ligand>
</feature>
<feature type="binding site" evidence="1">
    <location>
        <position position="229"/>
    </location>
    <ligand>
        <name>Mg(2+)</name>
        <dbReference type="ChEBI" id="CHEBI:18420"/>
        <label>2</label>
    </ligand>
</feature>
<feature type="binding site" evidence="1">
    <location>
        <position position="230"/>
    </location>
    <ligand>
        <name>Mg(2+)</name>
        <dbReference type="ChEBI" id="CHEBI:18420"/>
        <label>1</label>
    </ligand>
</feature>
<feature type="binding site" evidence="1">
    <location>
        <position position="230"/>
    </location>
    <ligand>
        <name>Mg(2+)</name>
        <dbReference type="ChEBI" id="CHEBI:18420"/>
        <label>2</label>
    </ligand>
</feature>
<proteinExistence type="inferred from homology"/>
<protein>
    <recommendedName>
        <fullName evidence="1">Anthranilate phosphoribosyltransferase</fullName>
        <ecNumber evidence="1">2.4.2.18</ecNumber>
    </recommendedName>
</protein>
<dbReference type="EC" id="2.4.2.18" evidence="1"/>
<dbReference type="EMBL" id="CP001025">
    <property type="protein sequence ID" value="ACB62958.1"/>
    <property type="molecule type" value="Genomic_DNA"/>
</dbReference>
<dbReference type="RefSeq" id="WP_012363010.1">
    <property type="nucleotide sequence ID" value="NC_010551.1"/>
</dbReference>
<dbReference type="SMR" id="B1YSF6"/>
<dbReference type="KEGG" id="bac:BamMC406_0461"/>
<dbReference type="HOGENOM" id="CLU_034315_2_1_4"/>
<dbReference type="OrthoDB" id="9806430at2"/>
<dbReference type="UniPathway" id="UPA00035">
    <property type="reaction ID" value="UER00041"/>
</dbReference>
<dbReference type="Proteomes" id="UP000001680">
    <property type="component" value="Chromosome 1"/>
</dbReference>
<dbReference type="GO" id="GO:0005829">
    <property type="term" value="C:cytosol"/>
    <property type="evidence" value="ECO:0007669"/>
    <property type="project" value="TreeGrafter"/>
</dbReference>
<dbReference type="GO" id="GO:0004048">
    <property type="term" value="F:anthranilate phosphoribosyltransferase activity"/>
    <property type="evidence" value="ECO:0007669"/>
    <property type="project" value="UniProtKB-UniRule"/>
</dbReference>
<dbReference type="GO" id="GO:0000287">
    <property type="term" value="F:magnesium ion binding"/>
    <property type="evidence" value="ECO:0007669"/>
    <property type="project" value="UniProtKB-UniRule"/>
</dbReference>
<dbReference type="GO" id="GO:0000162">
    <property type="term" value="P:L-tryptophan biosynthetic process"/>
    <property type="evidence" value="ECO:0007669"/>
    <property type="project" value="UniProtKB-UniRule"/>
</dbReference>
<dbReference type="FunFam" id="1.20.970.10:FF:000006">
    <property type="entry name" value="Anthranilate phosphoribosyltransferase"/>
    <property type="match status" value="1"/>
</dbReference>
<dbReference type="FunFam" id="3.40.1030.10:FF:000002">
    <property type="entry name" value="Anthranilate phosphoribosyltransferase"/>
    <property type="match status" value="1"/>
</dbReference>
<dbReference type="Gene3D" id="3.40.1030.10">
    <property type="entry name" value="Nucleoside phosphorylase/phosphoribosyltransferase catalytic domain"/>
    <property type="match status" value="1"/>
</dbReference>
<dbReference type="Gene3D" id="1.20.970.10">
    <property type="entry name" value="Transferase, Pyrimidine Nucleoside Phosphorylase, Chain C"/>
    <property type="match status" value="1"/>
</dbReference>
<dbReference type="HAMAP" id="MF_00211">
    <property type="entry name" value="TrpD"/>
    <property type="match status" value="1"/>
</dbReference>
<dbReference type="InterPro" id="IPR005940">
    <property type="entry name" value="Anthranilate_Pribosyl_Tfrase"/>
</dbReference>
<dbReference type="InterPro" id="IPR000312">
    <property type="entry name" value="Glycosyl_Trfase_fam3"/>
</dbReference>
<dbReference type="InterPro" id="IPR017459">
    <property type="entry name" value="Glycosyl_Trfase_fam3_N_dom"/>
</dbReference>
<dbReference type="InterPro" id="IPR036320">
    <property type="entry name" value="Glycosyl_Trfase_fam3_N_dom_sf"/>
</dbReference>
<dbReference type="InterPro" id="IPR035902">
    <property type="entry name" value="Nuc_phospho_transferase"/>
</dbReference>
<dbReference type="NCBIfam" id="TIGR01245">
    <property type="entry name" value="trpD"/>
    <property type="match status" value="1"/>
</dbReference>
<dbReference type="PANTHER" id="PTHR43285">
    <property type="entry name" value="ANTHRANILATE PHOSPHORIBOSYLTRANSFERASE"/>
    <property type="match status" value="1"/>
</dbReference>
<dbReference type="PANTHER" id="PTHR43285:SF2">
    <property type="entry name" value="ANTHRANILATE PHOSPHORIBOSYLTRANSFERASE"/>
    <property type="match status" value="1"/>
</dbReference>
<dbReference type="Pfam" id="PF02885">
    <property type="entry name" value="Glycos_trans_3N"/>
    <property type="match status" value="1"/>
</dbReference>
<dbReference type="Pfam" id="PF00591">
    <property type="entry name" value="Glycos_transf_3"/>
    <property type="match status" value="1"/>
</dbReference>
<dbReference type="SUPFAM" id="SSF52418">
    <property type="entry name" value="Nucleoside phosphorylase/phosphoribosyltransferase catalytic domain"/>
    <property type="match status" value="1"/>
</dbReference>
<dbReference type="SUPFAM" id="SSF47648">
    <property type="entry name" value="Nucleoside phosphorylase/phosphoribosyltransferase N-terminal domain"/>
    <property type="match status" value="1"/>
</dbReference>
<evidence type="ECO:0000255" key="1">
    <source>
        <dbReference type="HAMAP-Rule" id="MF_00211"/>
    </source>
</evidence>
<name>TRPD_BURA4</name>
<keyword id="KW-0028">Amino-acid biosynthesis</keyword>
<keyword id="KW-0057">Aromatic amino acid biosynthesis</keyword>
<keyword id="KW-0328">Glycosyltransferase</keyword>
<keyword id="KW-0460">Magnesium</keyword>
<keyword id="KW-0479">Metal-binding</keyword>
<keyword id="KW-0808">Transferase</keyword>
<keyword id="KW-0822">Tryptophan biosynthesis</keyword>
<comment type="function">
    <text evidence="1">Catalyzes the transfer of the phosphoribosyl group of 5-phosphorylribose-1-pyrophosphate (PRPP) to anthranilate to yield N-(5'-phosphoribosyl)-anthranilate (PRA).</text>
</comment>
<comment type="catalytic activity">
    <reaction evidence="1">
        <text>N-(5-phospho-beta-D-ribosyl)anthranilate + diphosphate = 5-phospho-alpha-D-ribose 1-diphosphate + anthranilate</text>
        <dbReference type="Rhea" id="RHEA:11768"/>
        <dbReference type="ChEBI" id="CHEBI:16567"/>
        <dbReference type="ChEBI" id="CHEBI:18277"/>
        <dbReference type="ChEBI" id="CHEBI:33019"/>
        <dbReference type="ChEBI" id="CHEBI:58017"/>
        <dbReference type="EC" id="2.4.2.18"/>
    </reaction>
</comment>
<comment type="cofactor">
    <cofactor evidence="1">
        <name>Mg(2+)</name>
        <dbReference type="ChEBI" id="CHEBI:18420"/>
    </cofactor>
    <text evidence="1">Binds 2 magnesium ions per monomer.</text>
</comment>
<comment type="pathway">
    <text evidence="1">Amino-acid biosynthesis; L-tryptophan biosynthesis; L-tryptophan from chorismate: step 2/5.</text>
</comment>
<comment type="subunit">
    <text evidence="1">Homodimer.</text>
</comment>
<comment type="similarity">
    <text evidence="1">Belongs to the anthranilate phosphoribosyltransferase family.</text>
</comment>
<reference key="1">
    <citation type="submission" date="2008-04" db="EMBL/GenBank/DDBJ databases">
        <title>Complete sequence of chromosome 1 of Burkholderia ambifaria MC40-6.</title>
        <authorList>
            <person name="Copeland A."/>
            <person name="Lucas S."/>
            <person name="Lapidus A."/>
            <person name="Glavina del Rio T."/>
            <person name="Dalin E."/>
            <person name="Tice H."/>
            <person name="Pitluck S."/>
            <person name="Chain P."/>
            <person name="Malfatti S."/>
            <person name="Shin M."/>
            <person name="Vergez L."/>
            <person name="Lang D."/>
            <person name="Schmutz J."/>
            <person name="Larimer F."/>
            <person name="Land M."/>
            <person name="Hauser L."/>
            <person name="Kyrpides N."/>
            <person name="Lykidis A."/>
            <person name="Ramette A."/>
            <person name="Konstantinidis K."/>
            <person name="Tiedje J."/>
            <person name="Richardson P."/>
        </authorList>
    </citation>
    <scope>NUCLEOTIDE SEQUENCE [LARGE SCALE GENOMIC DNA]</scope>
    <source>
        <strain>MC40-6</strain>
    </source>
</reference>
<gene>
    <name evidence="1" type="primary">trpD</name>
    <name type="ordered locus">BamMC406_0461</name>
</gene>
<organism>
    <name type="scientific">Burkholderia ambifaria (strain MC40-6)</name>
    <dbReference type="NCBI Taxonomy" id="398577"/>
    <lineage>
        <taxon>Bacteria</taxon>
        <taxon>Pseudomonadati</taxon>
        <taxon>Pseudomonadota</taxon>
        <taxon>Betaproteobacteria</taxon>
        <taxon>Burkholderiales</taxon>
        <taxon>Burkholderiaceae</taxon>
        <taxon>Burkholderia</taxon>
        <taxon>Burkholderia cepacia complex</taxon>
    </lineage>
</organism>
<accession>B1YSF6</accession>